<accession>Q9US13</accession>
<reference key="1">
    <citation type="journal article" date="2002" name="Nature">
        <title>The genome sequence of Schizosaccharomyces pombe.</title>
        <authorList>
            <person name="Wood V."/>
            <person name="Gwilliam R."/>
            <person name="Rajandream M.A."/>
            <person name="Lyne M.H."/>
            <person name="Lyne R."/>
            <person name="Stewart A."/>
            <person name="Sgouros J.G."/>
            <person name="Peat N."/>
            <person name="Hayles J."/>
            <person name="Baker S.G."/>
            <person name="Basham D."/>
            <person name="Bowman S."/>
            <person name="Brooks K."/>
            <person name="Brown D."/>
            <person name="Brown S."/>
            <person name="Chillingworth T."/>
            <person name="Churcher C.M."/>
            <person name="Collins M."/>
            <person name="Connor R."/>
            <person name="Cronin A."/>
            <person name="Davis P."/>
            <person name="Feltwell T."/>
            <person name="Fraser A."/>
            <person name="Gentles S."/>
            <person name="Goble A."/>
            <person name="Hamlin N."/>
            <person name="Harris D.E."/>
            <person name="Hidalgo J."/>
            <person name="Hodgson G."/>
            <person name="Holroyd S."/>
            <person name="Hornsby T."/>
            <person name="Howarth S."/>
            <person name="Huckle E.J."/>
            <person name="Hunt S."/>
            <person name="Jagels K."/>
            <person name="James K.D."/>
            <person name="Jones L."/>
            <person name="Jones M."/>
            <person name="Leather S."/>
            <person name="McDonald S."/>
            <person name="McLean J."/>
            <person name="Mooney P."/>
            <person name="Moule S."/>
            <person name="Mungall K.L."/>
            <person name="Murphy L.D."/>
            <person name="Niblett D."/>
            <person name="Odell C."/>
            <person name="Oliver K."/>
            <person name="O'Neil S."/>
            <person name="Pearson D."/>
            <person name="Quail M.A."/>
            <person name="Rabbinowitsch E."/>
            <person name="Rutherford K.M."/>
            <person name="Rutter S."/>
            <person name="Saunders D."/>
            <person name="Seeger K."/>
            <person name="Sharp S."/>
            <person name="Skelton J."/>
            <person name="Simmonds M.N."/>
            <person name="Squares R."/>
            <person name="Squares S."/>
            <person name="Stevens K."/>
            <person name="Taylor K."/>
            <person name="Taylor R.G."/>
            <person name="Tivey A."/>
            <person name="Walsh S.V."/>
            <person name="Warren T."/>
            <person name="Whitehead S."/>
            <person name="Woodward J.R."/>
            <person name="Volckaert G."/>
            <person name="Aert R."/>
            <person name="Robben J."/>
            <person name="Grymonprez B."/>
            <person name="Weltjens I."/>
            <person name="Vanstreels E."/>
            <person name="Rieger M."/>
            <person name="Schaefer M."/>
            <person name="Mueller-Auer S."/>
            <person name="Gabel C."/>
            <person name="Fuchs M."/>
            <person name="Duesterhoeft A."/>
            <person name="Fritzc C."/>
            <person name="Holzer E."/>
            <person name="Moestl D."/>
            <person name="Hilbert H."/>
            <person name="Borzym K."/>
            <person name="Langer I."/>
            <person name="Beck A."/>
            <person name="Lehrach H."/>
            <person name="Reinhardt R."/>
            <person name="Pohl T.M."/>
            <person name="Eger P."/>
            <person name="Zimmermann W."/>
            <person name="Wedler H."/>
            <person name="Wambutt R."/>
            <person name="Purnelle B."/>
            <person name="Goffeau A."/>
            <person name="Cadieu E."/>
            <person name="Dreano S."/>
            <person name="Gloux S."/>
            <person name="Lelaure V."/>
            <person name="Mottier S."/>
            <person name="Galibert F."/>
            <person name="Aves S.J."/>
            <person name="Xiang Z."/>
            <person name="Hunt C."/>
            <person name="Moore K."/>
            <person name="Hurst S.M."/>
            <person name="Lucas M."/>
            <person name="Rochet M."/>
            <person name="Gaillardin C."/>
            <person name="Tallada V.A."/>
            <person name="Garzon A."/>
            <person name="Thode G."/>
            <person name="Daga R.R."/>
            <person name="Cruzado L."/>
            <person name="Jimenez J."/>
            <person name="Sanchez M."/>
            <person name="del Rey F."/>
            <person name="Benito J."/>
            <person name="Dominguez A."/>
            <person name="Revuelta J.L."/>
            <person name="Moreno S."/>
            <person name="Armstrong J."/>
            <person name="Forsburg S.L."/>
            <person name="Cerutti L."/>
            <person name="Lowe T."/>
            <person name="McCombie W.R."/>
            <person name="Paulsen I."/>
            <person name="Potashkin J."/>
            <person name="Shpakovski G.V."/>
            <person name="Ussery D."/>
            <person name="Barrell B.G."/>
            <person name="Nurse P."/>
        </authorList>
    </citation>
    <scope>NUCLEOTIDE SEQUENCE [LARGE SCALE GENOMIC DNA]</scope>
    <source>
        <strain>972 / ATCC 24843</strain>
    </source>
</reference>
<name>RPN9_SCHPO</name>
<comment type="function">
    <text evidence="1">Acts as a regulatory subunit of the 26S proteasome which is involved in the ATP-dependent degradation of ubiquitinated proteins.</text>
</comment>
<comment type="similarity">
    <text evidence="3">Belongs to the proteasome subunit S11 family.</text>
</comment>
<proteinExistence type="inferred from homology"/>
<gene>
    <name type="primary">rpn9</name>
    <name type="ORF">SPAC607.05</name>
</gene>
<protein>
    <recommendedName>
        <fullName>Probable 26S proteasome regulatory subunit rpn9</fullName>
    </recommendedName>
</protein>
<feature type="chain" id="PRO_0000173869" description="Probable 26S proteasome regulatory subunit rpn9">
    <location>
        <begin position="1"/>
        <end position="381"/>
    </location>
</feature>
<feature type="domain" description="PCI" evidence="2">
    <location>
        <begin position="177"/>
        <end position="343"/>
    </location>
</feature>
<keyword id="KW-0647">Proteasome</keyword>
<keyword id="KW-1185">Reference proteome</keyword>
<dbReference type="EMBL" id="CU329670">
    <property type="protein sequence ID" value="CAB63792.1"/>
    <property type="molecule type" value="Genomic_DNA"/>
</dbReference>
<dbReference type="PIR" id="T50225">
    <property type="entry name" value="T50225"/>
</dbReference>
<dbReference type="RefSeq" id="NP_593594.1">
    <property type="nucleotide sequence ID" value="NM_001019025.2"/>
</dbReference>
<dbReference type="SMR" id="Q9US13"/>
<dbReference type="BioGRID" id="279546">
    <property type="interactions" value="14"/>
</dbReference>
<dbReference type="ComplexPortal" id="CPX-9077">
    <property type="entry name" value="26S proteasome complex"/>
</dbReference>
<dbReference type="FunCoup" id="Q9US13">
    <property type="interactions" value="899"/>
</dbReference>
<dbReference type="STRING" id="284812.Q9US13"/>
<dbReference type="PaxDb" id="4896-SPAC607.05.1"/>
<dbReference type="EnsemblFungi" id="SPAC607.05.1">
    <property type="protein sequence ID" value="SPAC607.05.1:pep"/>
    <property type="gene ID" value="SPAC607.05"/>
</dbReference>
<dbReference type="GeneID" id="2543114"/>
<dbReference type="KEGG" id="spo:2543114"/>
<dbReference type="PomBase" id="SPAC607.05">
    <property type="gene designation" value="rpn9"/>
</dbReference>
<dbReference type="VEuPathDB" id="FungiDB:SPAC607.05"/>
<dbReference type="eggNOG" id="KOG2908">
    <property type="taxonomic scope" value="Eukaryota"/>
</dbReference>
<dbReference type="HOGENOM" id="CLU_042989_0_0_1"/>
<dbReference type="InParanoid" id="Q9US13"/>
<dbReference type="OMA" id="SFEDYWE"/>
<dbReference type="PhylomeDB" id="Q9US13"/>
<dbReference type="Reactome" id="R-SPO-1236978">
    <property type="pathway name" value="Cross-presentation of soluble exogenous antigens (endosomes)"/>
</dbReference>
<dbReference type="Reactome" id="R-SPO-350562">
    <property type="pathway name" value="Regulation of ornithine decarboxylase (ODC)"/>
</dbReference>
<dbReference type="Reactome" id="R-SPO-5687128">
    <property type="pathway name" value="MAPK6/MAPK4 signaling"/>
</dbReference>
<dbReference type="Reactome" id="R-SPO-5689603">
    <property type="pathway name" value="UCH proteinases"/>
</dbReference>
<dbReference type="Reactome" id="R-SPO-5689880">
    <property type="pathway name" value="Ub-specific processing proteases"/>
</dbReference>
<dbReference type="Reactome" id="R-SPO-6798695">
    <property type="pathway name" value="Neutrophil degranulation"/>
</dbReference>
<dbReference type="Reactome" id="R-SPO-68949">
    <property type="pathway name" value="Orc1 removal from chromatin"/>
</dbReference>
<dbReference type="Reactome" id="R-SPO-69017">
    <property type="pathway name" value="CDK-mediated phosphorylation and removal of Cdc6"/>
</dbReference>
<dbReference type="Reactome" id="R-SPO-69601">
    <property type="pathway name" value="Ubiquitin Mediated Degradation of Phosphorylated Cdc25A"/>
</dbReference>
<dbReference type="Reactome" id="R-SPO-75815">
    <property type="pathway name" value="Ubiquitin-dependent degradation of Cyclin D"/>
</dbReference>
<dbReference type="Reactome" id="R-SPO-8854050">
    <property type="pathway name" value="FBXL7 down-regulates AURKA during mitotic entry and in early mitosis"/>
</dbReference>
<dbReference type="Reactome" id="R-SPO-8948751">
    <property type="pathway name" value="Regulation of PTEN stability and activity"/>
</dbReference>
<dbReference type="Reactome" id="R-SPO-8951664">
    <property type="pathway name" value="Neddylation"/>
</dbReference>
<dbReference type="Reactome" id="R-SPO-9755511">
    <property type="pathway name" value="KEAP1-NFE2L2 pathway"/>
</dbReference>
<dbReference type="Reactome" id="R-SPO-983168">
    <property type="pathway name" value="Antigen processing: Ubiquitination &amp; Proteasome degradation"/>
</dbReference>
<dbReference type="Reactome" id="R-SPO-9907900">
    <property type="pathway name" value="Proteasome assembly"/>
</dbReference>
<dbReference type="PRO" id="PR:Q9US13"/>
<dbReference type="Proteomes" id="UP000002485">
    <property type="component" value="Chromosome I"/>
</dbReference>
<dbReference type="GO" id="GO:0005829">
    <property type="term" value="C:cytosol"/>
    <property type="evidence" value="ECO:0000318"/>
    <property type="project" value="GO_Central"/>
</dbReference>
<dbReference type="GO" id="GO:0005634">
    <property type="term" value="C:nucleus"/>
    <property type="evidence" value="ECO:0000318"/>
    <property type="project" value="GO_Central"/>
</dbReference>
<dbReference type="GO" id="GO:0008541">
    <property type="term" value="C:proteasome regulatory particle, lid subcomplex"/>
    <property type="evidence" value="ECO:0000314"/>
    <property type="project" value="PomBase"/>
</dbReference>
<dbReference type="GO" id="GO:0005198">
    <property type="term" value="F:structural molecule activity"/>
    <property type="evidence" value="ECO:0000318"/>
    <property type="project" value="GO_Central"/>
</dbReference>
<dbReference type="GO" id="GO:0043161">
    <property type="term" value="P:proteasome-mediated ubiquitin-dependent protein catabolic process"/>
    <property type="evidence" value="ECO:0000305"/>
    <property type="project" value="PomBase"/>
</dbReference>
<dbReference type="GO" id="GO:0006511">
    <property type="term" value="P:ubiquitin-dependent protein catabolic process"/>
    <property type="evidence" value="ECO:0000318"/>
    <property type="project" value="GO_Central"/>
</dbReference>
<dbReference type="InterPro" id="IPR000717">
    <property type="entry name" value="PCI_dom"/>
</dbReference>
<dbReference type="InterPro" id="IPR054179">
    <property type="entry name" value="PSD13_N"/>
</dbReference>
<dbReference type="InterPro" id="IPR035298">
    <property type="entry name" value="PSMD13"/>
</dbReference>
<dbReference type="InterPro" id="IPR040798">
    <property type="entry name" value="Rpn9_C"/>
</dbReference>
<dbReference type="InterPro" id="IPR036390">
    <property type="entry name" value="WH_DNA-bd_sf"/>
</dbReference>
<dbReference type="PANTHER" id="PTHR10539">
    <property type="entry name" value="26S PROTEASOME NON-ATPASE REGULATORY SUBUNIT 13"/>
    <property type="match status" value="1"/>
</dbReference>
<dbReference type="PANTHER" id="PTHR10539:SF0">
    <property type="entry name" value="26S PROTEASOME NON-ATPASE REGULATORY SUBUNIT 13"/>
    <property type="match status" value="1"/>
</dbReference>
<dbReference type="Pfam" id="PF01399">
    <property type="entry name" value="PCI"/>
    <property type="match status" value="1"/>
</dbReference>
<dbReference type="Pfam" id="PF22037">
    <property type="entry name" value="PSD13_N"/>
    <property type="match status" value="1"/>
</dbReference>
<dbReference type="Pfam" id="PF18261">
    <property type="entry name" value="Rpn9_C"/>
    <property type="match status" value="1"/>
</dbReference>
<dbReference type="SMART" id="SM00088">
    <property type="entry name" value="PINT"/>
    <property type="match status" value="1"/>
</dbReference>
<dbReference type="SUPFAM" id="SSF46785">
    <property type="entry name" value="Winged helix' DNA-binding domain"/>
    <property type="match status" value="1"/>
</dbReference>
<dbReference type="PROSITE" id="PS50250">
    <property type="entry name" value="PCI"/>
    <property type="match status" value="1"/>
</dbReference>
<sequence>MDTEMSVNMSDFLHDQATRAPESLQQSYILMEDLYERKLWKQLTDALIVFFDTPETVPLRLPLYTNFVNSFRPNINQLKAVYMGLKAFESCSNDEALRNLNQIVNELDEEKYKDAYVYSIVAIARIKLISGKLDEARELLVKASKIIDHIDYVESLIHSSYYSVSADYYKAKADYAQYYRHCLLYLSCIDLDKCSHTELVERAVDLSVAAILGDIYNFGELLLHPVFELLVGTQHEWLHDLVIAMNVGDLPLFERLMGQINKMPLLQSSVALLGQKIRLMALIELVFQLPPNQRTLTFDTIARATRIPSNEVELLIMRALSVGLITGVIDEVTQIVTISSVQSRILNHSQIASMESRLREWNQNIKNLSNVVEISGKGVFV</sequence>
<organism>
    <name type="scientific">Schizosaccharomyces pombe (strain 972 / ATCC 24843)</name>
    <name type="common">Fission yeast</name>
    <dbReference type="NCBI Taxonomy" id="284812"/>
    <lineage>
        <taxon>Eukaryota</taxon>
        <taxon>Fungi</taxon>
        <taxon>Dikarya</taxon>
        <taxon>Ascomycota</taxon>
        <taxon>Taphrinomycotina</taxon>
        <taxon>Schizosaccharomycetes</taxon>
        <taxon>Schizosaccharomycetales</taxon>
        <taxon>Schizosaccharomycetaceae</taxon>
        <taxon>Schizosaccharomyces</taxon>
    </lineage>
</organism>
<evidence type="ECO:0000250" key="1"/>
<evidence type="ECO:0000255" key="2">
    <source>
        <dbReference type="PROSITE-ProRule" id="PRU01185"/>
    </source>
</evidence>
<evidence type="ECO:0000305" key="3"/>